<gene>
    <name evidence="1" type="primary">thiC</name>
    <name type="ordered locus">Daud_2018</name>
</gene>
<evidence type="ECO:0000255" key="1">
    <source>
        <dbReference type="HAMAP-Rule" id="MF_00089"/>
    </source>
</evidence>
<feature type="chain" id="PRO_1000093205" description="Phosphomethylpyrimidine synthase">
    <location>
        <begin position="1"/>
        <end position="432"/>
    </location>
</feature>
<feature type="binding site" evidence="1">
    <location>
        <position position="66"/>
    </location>
    <ligand>
        <name>substrate</name>
    </ligand>
</feature>
<feature type="binding site" evidence="1">
    <location>
        <position position="95"/>
    </location>
    <ligand>
        <name>substrate</name>
    </ligand>
</feature>
<feature type="binding site" evidence="1">
    <location>
        <position position="124"/>
    </location>
    <ligand>
        <name>substrate</name>
    </ligand>
</feature>
<feature type="binding site" evidence="1">
    <location>
        <position position="163"/>
    </location>
    <ligand>
        <name>substrate</name>
    </ligand>
</feature>
<feature type="binding site" evidence="1">
    <location>
        <begin position="185"/>
        <end position="187"/>
    </location>
    <ligand>
        <name>substrate</name>
    </ligand>
</feature>
<feature type="binding site" evidence="1">
    <location>
        <begin position="226"/>
        <end position="229"/>
    </location>
    <ligand>
        <name>substrate</name>
    </ligand>
</feature>
<feature type="binding site" evidence="1">
    <location>
        <position position="265"/>
    </location>
    <ligand>
        <name>substrate</name>
    </ligand>
</feature>
<feature type="binding site" evidence="1">
    <location>
        <position position="269"/>
    </location>
    <ligand>
        <name>Zn(2+)</name>
        <dbReference type="ChEBI" id="CHEBI:29105"/>
    </ligand>
</feature>
<feature type="binding site" evidence="1">
    <location>
        <position position="292"/>
    </location>
    <ligand>
        <name>substrate</name>
    </ligand>
</feature>
<feature type="binding site" evidence="1">
    <location>
        <position position="333"/>
    </location>
    <ligand>
        <name>Zn(2+)</name>
        <dbReference type="ChEBI" id="CHEBI:29105"/>
    </ligand>
</feature>
<feature type="binding site" evidence="1">
    <location>
        <position position="409"/>
    </location>
    <ligand>
        <name>[4Fe-4S] cluster</name>
        <dbReference type="ChEBI" id="CHEBI:49883"/>
        <note>4Fe-4S-S-AdoMet</note>
    </ligand>
</feature>
<feature type="binding site" evidence="1">
    <location>
        <position position="412"/>
    </location>
    <ligand>
        <name>[4Fe-4S] cluster</name>
        <dbReference type="ChEBI" id="CHEBI:49883"/>
        <note>4Fe-4S-S-AdoMet</note>
    </ligand>
</feature>
<feature type="binding site" evidence="1">
    <location>
        <position position="416"/>
    </location>
    <ligand>
        <name>[4Fe-4S] cluster</name>
        <dbReference type="ChEBI" id="CHEBI:49883"/>
        <note>4Fe-4S-S-AdoMet</note>
    </ligand>
</feature>
<proteinExistence type="inferred from homology"/>
<protein>
    <recommendedName>
        <fullName evidence="1">Phosphomethylpyrimidine synthase</fullName>
        <ecNumber evidence="1">4.1.99.17</ecNumber>
    </recommendedName>
    <alternativeName>
        <fullName evidence="1">Hydroxymethylpyrimidine phosphate synthase</fullName>
        <shortName evidence="1">HMP-P synthase</shortName>
        <shortName evidence="1">HMP-phosphate synthase</shortName>
        <shortName evidence="1">HMPP synthase</shortName>
    </alternativeName>
    <alternativeName>
        <fullName evidence="1">Thiamine biosynthesis protein ThiC</fullName>
    </alternativeName>
</protein>
<comment type="function">
    <text evidence="1">Catalyzes the synthesis of the hydroxymethylpyrimidine phosphate (HMP-P) moiety of thiamine from aminoimidazole ribotide (AIR) in a radical S-adenosyl-L-methionine (SAM)-dependent reaction.</text>
</comment>
<comment type="catalytic activity">
    <reaction evidence="1">
        <text>5-amino-1-(5-phospho-beta-D-ribosyl)imidazole + S-adenosyl-L-methionine = 4-amino-2-methyl-5-(phosphooxymethyl)pyrimidine + CO + 5'-deoxyadenosine + formate + L-methionine + 3 H(+)</text>
        <dbReference type="Rhea" id="RHEA:24840"/>
        <dbReference type="ChEBI" id="CHEBI:15378"/>
        <dbReference type="ChEBI" id="CHEBI:15740"/>
        <dbReference type="ChEBI" id="CHEBI:17245"/>
        <dbReference type="ChEBI" id="CHEBI:17319"/>
        <dbReference type="ChEBI" id="CHEBI:57844"/>
        <dbReference type="ChEBI" id="CHEBI:58354"/>
        <dbReference type="ChEBI" id="CHEBI:59789"/>
        <dbReference type="ChEBI" id="CHEBI:137981"/>
        <dbReference type="EC" id="4.1.99.17"/>
    </reaction>
</comment>
<comment type="cofactor">
    <cofactor evidence="1">
        <name>[4Fe-4S] cluster</name>
        <dbReference type="ChEBI" id="CHEBI:49883"/>
    </cofactor>
    <text evidence="1">Binds 1 [4Fe-4S] cluster per subunit. The cluster is coordinated with 3 cysteines and an exchangeable S-adenosyl-L-methionine.</text>
</comment>
<comment type="pathway">
    <text evidence="1">Cofactor biosynthesis; thiamine diphosphate biosynthesis.</text>
</comment>
<comment type="similarity">
    <text evidence="1">Belongs to the ThiC family.</text>
</comment>
<sequence length="432" mass="47335">MNQMLAAWQGTVTPEMEQVARDEGYPVEPVLQGVAAGTIVIPANMRRKNLKAVGIGTGLRTKVNANIGTSPKQSALDDHRVKLRVALDAGADAVMDLSTGGDLDRCRREILASCPVPVGTVPIYQAAIEAKERYGAIVAMREDELFEVVERQAKDGVDFFTIHAGVTLESLDRLRKQGRLTDIVSRGGSFLTGWMLHNDRENPFYKEFDRLLEICLAYDVALSLGDGMRPGCQADATDRAQVQELLILGELVDRCREAGVQVFVEGPGHVPLDQIIMNVQLQKRLCKGAPFYVLGPLVTDVAPGYDHITAAIGGAVAAMAGADFLCYVTPAEHLGLPTVEDVREGVIATRIAGHAADLVKRVPGAREWDERMSRARKALDWEKQIELAIDPEKARRYHTERNPEKFAGCTMCGEFCAMKLVGEYLGKDYENC</sequence>
<dbReference type="EC" id="4.1.99.17" evidence="1"/>
<dbReference type="EMBL" id="CP000860">
    <property type="protein sequence ID" value="ACA60509.1"/>
    <property type="molecule type" value="Genomic_DNA"/>
</dbReference>
<dbReference type="RefSeq" id="WP_012303084.1">
    <property type="nucleotide sequence ID" value="NC_010424.1"/>
</dbReference>
<dbReference type="SMR" id="B1I672"/>
<dbReference type="STRING" id="477974.Daud_2018"/>
<dbReference type="KEGG" id="dau:Daud_2018"/>
<dbReference type="eggNOG" id="COG0422">
    <property type="taxonomic scope" value="Bacteria"/>
</dbReference>
<dbReference type="HOGENOM" id="CLU_013181_2_2_9"/>
<dbReference type="OrthoDB" id="9805897at2"/>
<dbReference type="UniPathway" id="UPA00060"/>
<dbReference type="Proteomes" id="UP000008544">
    <property type="component" value="Chromosome"/>
</dbReference>
<dbReference type="GO" id="GO:0051539">
    <property type="term" value="F:4 iron, 4 sulfur cluster binding"/>
    <property type="evidence" value="ECO:0007669"/>
    <property type="project" value="UniProtKB-KW"/>
</dbReference>
<dbReference type="GO" id="GO:0016830">
    <property type="term" value="F:carbon-carbon lyase activity"/>
    <property type="evidence" value="ECO:0007669"/>
    <property type="project" value="InterPro"/>
</dbReference>
<dbReference type="GO" id="GO:0008270">
    <property type="term" value="F:zinc ion binding"/>
    <property type="evidence" value="ECO:0007669"/>
    <property type="project" value="UniProtKB-UniRule"/>
</dbReference>
<dbReference type="GO" id="GO:0009228">
    <property type="term" value="P:thiamine biosynthetic process"/>
    <property type="evidence" value="ECO:0007669"/>
    <property type="project" value="UniProtKB-KW"/>
</dbReference>
<dbReference type="GO" id="GO:0009229">
    <property type="term" value="P:thiamine diphosphate biosynthetic process"/>
    <property type="evidence" value="ECO:0007669"/>
    <property type="project" value="UniProtKB-UniRule"/>
</dbReference>
<dbReference type="FunFam" id="3.20.20.540:FF:000001">
    <property type="entry name" value="Phosphomethylpyrimidine synthase"/>
    <property type="match status" value="1"/>
</dbReference>
<dbReference type="Gene3D" id="6.10.250.620">
    <property type="match status" value="1"/>
</dbReference>
<dbReference type="Gene3D" id="3.20.20.540">
    <property type="entry name" value="Radical SAM ThiC family, central domain"/>
    <property type="match status" value="1"/>
</dbReference>
<dbReference type="HAMAP" id="MF_00089">
    <property type="entry name" value="ThiC"/>
    <property type="match status" value="1"/>
</dbReference>
<dbReference type="InterPro" id="IPR037509">
    <property type="entry name" value="ThiC"/>
</dbReference>
<dbReference type="InterPro" id="IPR038521">
    <property type="entry name" value="ThiC/Bza_core_dom"/>
</dbReference>
<dbReference type="InterPro" id="IPR002817">
    <property type="entry name" value="ThiC/BzaA/B"/>
</dbReference>
<dbReference type="NCBIfam" id="NF009895">
    <property type="entry name" value="PRK13352.1"/>
    <property type="match status" value="1"/>
</dbReference>
<dbReference type="NCBIfam" id="TIGR00190">
    <property type="entry name" value="thiC"/>
    <property type="match status" value="1"/>
</dbReference>
<dbReference type="PANTHER" id="PTHR30557:SF1">
    <property type="entry name" value="PHOSPHOMETHYLPYRIMIDINE SYNTHASE, CHLOROPLASTIC"/>
    <property type="match status" value="1"/>
</dbReference>
<dbReference type="PANTHER" id="PTHR30557">
    <property type="entry name" value="THIAMINE BIOSYNTHESIS PROTEIN THIC"/>
    <property type="match status" value="1"/>
</dbReference>
<dbReference type="Pfam" id="PF01964">
    <property type="entry name" value="ThiC_Rad_SAM"/>
    <property type="match status" value="1"/>
</dbReference>
<dbReference type="SFLD" id="SFLDF00407">
    <property type="entry name" value="phosphomethylpyrimidine_syntha"/>
    <property type="match status" value="1"/>
</dbReference>
<dbReference type="SFLD" id="SFLDG01114">
    <property type="entry name" value="phosphomethylpyrimidine_syntha"/>
    <property type="match status" value="1"/>
</dbReference>
<dbReference type="SFLD" id="SFLDS00113">
    <property type="entry name" value="Radical_SAM_Phosphomethylpyrim"/>
    <property type="match status" value="1"/>
</dbReference>
<name>THIC_DESAP</name>
<accession>B1I672</accession>
<reference key="1">
    <citation type="submission" date="2007-10" db="EMBL/GenBank/DDBJ databases">
        <title>Complete sequence of chromosome of Desulforudis audaxviator MP104C.</title>
        <authorList>
            <person name="Copeland A."/>
            <person name="Lucas S."/>
            <person name="Lapidus A."/>
            <person name="Barry K."/>
            <person name="Glavina del Rio T."/>
            <person name="Dalin E."/>
            <person name="Tice H."/>
            <person name="Bruce D."/>
            <person name="Pitluck S."/>
            <person name="Lowry S.R."/>
            <person name="Larimer F."/>
            <person name="Land M.L."/>
            <person name="Hauser L."/>
            <person name="Kyrpides N."/>
            <person name="Ivanova N.N."/>
            <person name="Richardson P."/>
        </authorList>
    </citation>
    <scope>NUCLEOTIDE SEQUENCE [LARGE SCALE GENOMIC DNA]</scope>
    <source>
        <strain>MP104C</strain>
    </source>
</reference>
<keyword id="KW-0004">4Fe-4S</keyword>
<keyword id="KW-0408">Iron</keyword>
<keyword id="KW-0411">Iron-sulfur</keyword>
<keyword id="KW-0456">Lyase</keyword>
<keyword id="KW-0479">Metal-binding</keyword>
<keyword id="KW-1185">Reference proteome</keyword>
<keyword id="KW-0949">S-adenosyl-L-methionine</keyword>
<keyword id="KW-0784">Thiamine biosynthesis</keyword>
<keyword id="KW-0862">Zinc</keyword>
<organism>
    <name type="scientific">Desulforudis audaxviator (strain MP104C)</name>
    <dbReference type="NCBI Taxonomy" id="477974"/>
    <lineage>
        <taxon>Bacteria</taxon>
        <taxon>Bacillati</taxon>
        <taxon>Bacillota</taxon>
        <taxon>Clostridia</taxon>
        <taxon>Thermoanaerobacterales</taxon>
        <taxon>Candidatus Desulforudaceae</taxon>
        <taxon>Candidatus Desulforudis</taxon>
    </lineage>
</organism>